<reference key="1">
    <citation type="journal article" date="2000" name="DNA Res.">
        <title>Structural analysis of Arabidopsis thaliana chromosome 5. X. Sequence features of the regions of 3,076,755 bp covered by sixty P1 and TAC clones.</title>
        <authorList>
            <person name="Sato S."/>
            <person name="Nakamura Y."/>
            <person name="Kaneko T."/>
            <person name="Katoh T."/>
            <person name="Asamizu E."/>
            <person name="Kotani H."/>
            <person name="Tabata S."/>
        </authorList>
    </citation>
    <scope>NUCLEOTIDE SEQUENCE [LARGE SCALE GENOMIC DNA]</scope>
    <source>
        <strain>cv. Columbia</strain>
    </source>
</reference>
<reference key="2">
    <citation type="journal article" date="2017" name="Plant J.">
        <title>Araport11: a complete reannotation of the Arabidopsis thaliana reference genome.</title>
        <authorList>
            <person name="Cheng C.Y."/>
            <person name="Krishnakumar V."/>
            <person name="Chan A.P."/>
            <person name="Thibaud-Nissen F."/>
            <person name="Schobel S."/>
            <person name="Town C.D."/>
        </authorList>
    </citation>
    <scope>GENOME REANNOTATION</scope>
    <source>
        <strain>cv. Columbia</strain>
    </source>
</reference>
<reference key="3">
    <citation type="submission" date="2006-11" db="EMBL/GenBank/DDBJ databases">
        <title>Arabidopsis ORF Clones.</title>
        <authorList>
            <person name="Bautista V.R."/>
            <person name="Kim C.J."/>
            <person name="Chen H."/>
            <person name="Quinitio C."/>
            <person name="Ecker J.R."/>
        </authorList>
    </citation>
    <scope>NUCLEOTIDE SEQUENCE [LARGE SCALE MRNA]</scope>
    <source>
        <strain>cv. Columbia</strain>
    </source>
</reference>
<reference key="4">
    <citation type="journal article" date="2008" name="Trends Plant Sci.">
        <title>The plant B3 superfamily.</title>
        <authorList>
            <person name="Swaminathan K."/>
            <person name="Peterson K."/>
            <person name="Jack T."/>
        </authorList>
    </citation>
    <scope>GENE FAMILY</scope>
</reference>
<evidence type="ECO:0000250" key="1"/>
<accession>Q3E7N5</accession>
<organism>
    <name type="scientific">Arabidopsis thaliana</name>
    <name type="common">Mouse-ear cress</name>
    <dbReference type="NCBI Taxonomy" id="3702"/>
    <lineage>
        <taxon>Eukaryota</taxon>
        <taxon>Viridiplantae</taxon>
        <taxon>Streptophyta</taxon>
        <taxon>Embryophyta</taxon>
        <taxon>Tracheophyta</taxon>
        <taxon>Spermatophyta</taxon>
        <taxon>Magnoliopsida</taxon>
        <taxon>eudicotyledons</taxon>
        <taxon>Gunneridae</taxon>
        <taxon>Pentapetalae</taxon>
        <taxon>rosids</taxon>
        <taxon>malvids</taxon>
        <taxon>Brassicales</taxon>
        <taxon>Brassicaceae</taxon>
        <taxon>Camelineae</taxon>
        <taxon>Arabidopsis</taxon>
    </lineage>
</organism>
<protein>
    <recommendedName>
        <fullName>B3 domain-containing protein At5g54067</fullName>
    </recommendedName>
</protein>
<keyword id="KW-0238">DNA-binding</keyword>
<keyword id="KW-0539">Nucleus</keyword>
<keyword id="KW-1185">Reference proteome</keyword>
<keyword id="KW-0804">Transcription</keyword>
<keyword id="KW-0805">Transcription regulation</keyword>
<gene>
    <name type="ordered locus">At5g54067</name>
    <name type="ORF">MJP23</name>
</gene>
<comment type="subcellular location">
    <subcellularLocation>
        <location evidence="1">Nucleus</location>
    </subcellularLocation>
</comment>
<feature type="chain" id="PRO_0000375154" description="B3 domain-containing protein At5g54067">
    <location>
        <begin position="1"/>
        <end position="126"/>
    </location>
</feature>
<feature type="DNA-binding region" description="TF-B3">
    <location>
        <begin position="20"/>
        <end position="118"/>
    </location>
</feature>
<name>Y5406_ARATH</name>
<sequence length="126" mass="14270">MNYNDPLEPAMIITKVLSKSDIVGNVVLPKAEVMSVLTRMNVNDQDLLNGVEVQVDDIMEDDLYTVTLKVSGIDKPKYYFGTGWSTMKHSLDLSEGDVLKLYWSHLDNKFVVLNFQYSVLPLMIPV</sequence>
<proteinExistence type="evidence at transcript level"/>
<dbReference type="EMBL" id="AB018115">
    <property type="status" value="NOT_ANNOTATED_CDS"/>
    <property type="molecule type" value="Genomic_DNA"/>
</dbReference>
<dbReference type="EMBL" id="CP002688">
    <property type="protein sequence ID" value="AED96445.1"/>
    <property type="molecule type" value="Genomic_DNA"/>
</dbReference>
<dbReference type="EMBL" id="BT029310">
    <property type="protein sequence ID" value="ABK32124.1"/>
    <property type="molecule type" value="mRNA"/>
</dbReference>
<dbReference type="RefSeq" id="NP_680433.1">
    <property type="nucleotide sequence ID" value="NM_148128.2"/>
</dbReference>
<dbReference type="SMR" id="Q3E7N5"/>
<dbReference type="BioGRID" id="20736">
    <property type="interactions" value="10"/>
</dbReference>
<dbReference type="IntAct" id="Q3E7N5">
    <property type="interactions" value="10"/>
</dbReference>
<dbReference type="PaxDb" id="3702-AT5G54067.1"/>
<dbReference type="EnsemblPlants" id="AT5G54067.1">
    <property type="protein sequence ID" value="AT5G54067.1"/>
    <property type="gene ID" value="AT5G54067"/>
</dbReference>
<dbReference type="GeneID" id="835492"/>
<dbReference type="Gramene" id="AT5G54067.1">
    <property type="protein sequence ID" value="AT5G54067.1"/>
    <property type="gene ID" value="AT5G54067"/>
</dbReference>
<dbReference type="KEGG" id="ath:AT5G54067"/>
<dbReference type="Araport" id="AT5G54067"/>
<dbReference type="TAIR" id="AT5G54067"/>
<dbReference type="HOGENOM" id="CLU_162241_0_0_1"/>
<dbReference type="InParanoid" id="Q3E7N5"/>
<dbReference type="OMA" id="FRIDPAM"/>
<dbReference type="OrthoDB" id="1037992at2759"/>
<dbReference type="PhylomeDB" id="Q3E7N5"/>
<dbReference type="PRO" id="PR:Q3E7N5"/>
<dbReference type="Proteomes" id="UP000006548">
    <property type="component" value="Chromosome 5"/>
</dbReference>
<dbReference type="ExpressionAtlas" id="Q3E7N5">
    <property type="expression patterns" value="baseline"/>
</dbReference>
<dbReference type="GO" id="GO:0005634">
    <property type="term" value="C:nucleus"/>
    <property type="evidence" value="ECO:0007669"/>
    <property type="project" value="UniProtKB-SubCell"/>
</dbReference>
<dbReference type="GO" id="GO:0003677">
    <property type="term" value="F:DNA binding"/>
    <property type="evidence" value="ECO:0007669"/>
    <property type="project" value="UniProtKB-KW"/>
</dbReference>
<dbReference type="CDD" id="cd10017">
    <property type="entry name" value="B3_DNA"/>
    <property type="match status" value="1"/>
</dbReference>
<dbReference type="Gene3D" id="2.40.330.10">
    <property type="entry name" value="DNA-binding pseudobarrel domain"/>
    <property type="match status" value="1"/>
</dbReference>
<dbReference type="InterPro" id="IPR003340">
    <property type="entry name" value="B3_DNA-bd"/>
</dbReference>
<dbReference type="InterPro" id="IPR051442">
    <property type="entry name" value="B3_domain"/>
</dbReference>
<dbReference type="InterPro" id="IPR015300">
    <property type="entry name" value="DNA-bd_pseudobarrel_sf"/>
</dbReference>
<dbReference type="PANTHER" id="PTHR34269:SF15">
    <property type="entry name" value="TF-B3 DOMAIN-CONTAINING PROTEIN"/>
    <property type="match status" value="1"/>
</dbReference>
<dbReference type="PANTHER" id="PTHR34269">
    <property type="entry name" value="TRANSCRIPTION FACTOR B3-DOMAIN FAMILY-RELATED"/>
    <property type="match status" value="1"/>
</dbReference>
<dbReference type="SMART" id="SM01019">
    <property type="entry name" value="B3"/>
    <property type="match status" value="1"/>
</dbReference>
<dbReference type="SUPFAM" id="SSF101936">
    <property type="entry name" value="DNA-binding pseudobarrel domain"/>
    <property type="match status" value="1"/>
</dbReference>